<sequence>MDALRAVAFYALFVFLWSLPCCQSAALISQKRSKGARSAFDGQRSHKFLKEILASSPGASRRDDFKDPVVPHDYMISIYRTYSAAEKLGLNASFFRSSKSANTITSFVDKGKDDLTLSPLRRQTYLFDVSTLSDKEELVGAELRIFRKSPGDVQPSPSGVYNLHLLSCRSERPLASRSIDLQDSRKAEWEVLDVWGIFKHRHQENQLCLQLKVTYGKSDTEIDLKQLGFHRHSRTQQERAILVVYTRSKKRENLFNEMKEKIKSRGDDDEEESALQFKARRRRRTALNNRHGKRHGKKSKSRCSKKALHVNFKELGWDDWIIAPLDYEAYHCEGVCDFPLRSHLEPTNHAIIQTLMNSMDPNSTPPSCCVPTKLSPISILYIDSGNNVVYKQYEDMVVEQCGCR</sequence>
<protein>
    <recommendedName>
        <fullName>Growth/differentiation factor 6-A</fullName>
        <shortName>GDF-6-A</shortName>
    </recommendedName>
    <alternativeName>
        <fullName>Growth differentiation factor 6A</fullName>
    </alternativeName>
    <alternativeName>
        <fullName>Protein radar</fullName>
    </alternativeName>
</protein>
<comment type="function">
    <text evidence="5 6 7 8 9 10 11 12">Growth factor that controls proliferation and cellular differentiation in the retina. Plays a key role in regulating apoptosis during retinal development. Establishes dorsal-ventral positional information in the retina and controls the formation of the retinotectal map. Functions maternally in dorsal/ventral patterning to induce the expression of the zygotic bmp2b and bmp4 genes and ventralize embryos. Zygotic expression does not appear to regulate axis specification, but instead functions to establish the integrity of the axial vessels during embryonic development. May be involved in maintaining the identity of cells of the dorsal-most neural tube and of at least a subset of neural crest cells.</text>
</comment>
<comment type="subunit">
    <text evidence="2">Homodimer; disulfide-linked.</text>
</comment>
<comment type="subcellular location">
    <subcellularLocation>
        <location evidence="1">Secreted</location>
    </subcellularLocation>
</comment>
<comment type="tissue specificity">
    <text evidence="5 6 7 12">First expressed in late gastrula stage embryos (9.5 hours post fertilization (hpf)) in anterior neuroectoderm corresponding to the future dorsal part of the brain. Shortly after tailbud formation (11 hpf), expression expands to the entire neural region and is subsequently expressed in derivatives of the lateral neural plate and migrating neural crest cells, with the future midbrain and hindbrain showing strong expression. Also expressed weakly and transiently in the posterior embryo from 11.5 hpf to 15 hpf in the lateral mesoderm, and in ectoderm above the neural keel. At 14 hpf, expressed along the entire length of the embryo and starting around the 16-somite stage, expressed in the dorsal quadrant of the retina, representing the distal tip of the eye anlage. At this stage, also expressed in the hatching gland and the hypochord. At 24 hpf, expressed in the roof plate outlining the fourth brain ventricle, in the posterior hypochord, the primitive gut endoderm, the ventral tail mesenchyme, the dorsal part of the neural tube and the dorsal fin. Weakly expressed in the dorsal part of the posterior spinal cord and in blood cell precursors.</text>
</comment>
<comment type="developmental stage">
    <text evidence="6 8">Expressed both maternally and zygotically. Expressed from early cleavage stage until blastula sphere stage. Expression is then barely detectable until the end of gastrulation (tailbud stage) when expression is resumed.</text>
</comment>
<comment type="disruption phenotype">
    <text evidence="10">Adults display microphthalmia, with eyes obscured by overgrown skin and misshapen irides. Mutants at 2 weeks of age show profound alterations in the morphology of individual photoreceptor subtypes and UV cones. At later timepoints loss of normal retinal lamination is observed, together with a disorganization of Mueller glia cells. Adults, cone photoreceptors are dysmorphic and reduced in abundance.</text>
</comment>
<comment type="similarity">
    <text evidence="3">Belongs to the TGF-beta family.</text>
</comment>
<name>GDF6A_DANRE</name>
<organism>
    <name type="scientific">Danio rerio</name>
    <name type="common">Zebrafish</name>
    <name type="synonym">Brachydanio rerio</name>
    <dbReference type="NCBI Taxonomy" id="7955"/>
    <lineage>
        <taxon>Eukaryota</taxon>
        <taxon>Metazoa</taxon>
        <taxon>Chordata</taxon>
        <taxon>Craniata</taxon>
        <taxon>Vertebrata</taxon>
        <taxon>Euteleostomi</taxon>
        <taxon>Actinopterygii</taxon>
        <taxon>Neopterygii</taxon>
        <taxon>Teleostei</taxon>
        <taxon>Ostariophysi</taxon>
        <taxon>Cypriniformes</taxon>
        <taxon>Danionidae</taxon>
        <taxon>Danioninae</taxon>
        <taxon>Danio</taxon>
    </lineage>
</organism>
<proteinExistence type="evidence at protein level"/>
<feature type="signal peptide" evidence="3">
    <location>
        <begin position="1"/>
        <end position="24"/>
    </location>
</feature>
<feature type="propeptide" id="PRO_0000342703" evidence="3">
    <location>
        <begin position="25"/>
        <end position="284"/>
    </location>
</feature>
<feature type="chain" id="PRO_0000342704" description="Growth/differentiation factor 6-A" evidence="3">
    <location>
        <begin position="285"/>
        <end position="404"/>
    </location>
</feature>
<feature type="region of interest" description="Disordered" evidence="4">
    <location>
        <begin position="263"/>
        <end position="304"/>
    </location>
</feature>
<feature type="compositionally biased region" description="Basic residues" evidence="4">
    <location>
        <begin position="278"/>
        <end position="304"/>
    </location>
</feature>
<feature type="glycosylation site" description="N-linked (GlcNAc...) asparagine" evidence="3">
    <location>
        <position position="91"/>
    </location>
</feature>
<feature type="disulfide bond" evidence="2">
    <location>
        <begin position="303"/>
        <end position="369"/>
    </location>
</feature>
<feature type="disulfide bond" evidence="2">
    <location>
        <begin position="332"/>
        <end position="401"/>
    </location>
</feature>
<feature type="disulfide bond" evidence="2">
    <location>
        <begin position="336"/>
        <end position="403"/>
    </location>
</feature>
<feature type="disulfide bond" description="Interchain" evidence="2">
    <location>
        <position position="368"/>
    </location>
</feature>
<feature type="sequence conflict" description="In Ref. 2; no nucleotide entry." evidence="15" ref="2">
    <original>E</original>
    <variation>R</variation>
    <location>
        <position position="51"/>
    </location>
</feature>
<feature type="sequence conflict" description="In Ref. 2; no nucleotide entry." evidence="15" ref="2">
    <original>V</original>
    <variation>L</variation>
    <location>
        <position position="70"/>
    </location>
</feature>
<reference evidence="15" key="1">
    <citation type="journal article" date="1999" name="Mech. Dev.">
        <title>The BMP-related protein radar: a maintenance factor for dorsal neuroectoderm cells?</title>
        <authorList>
            <person name="Delot E."/>
            <person name="Kataoka H."/>
            <person name="Goutel C."/>
            <person name="Yan Y.-L."/>
            <person name="Postlethwait J."/>
            <person name="Wittbrodt J."/>
            <person name="Rosa F.M."/>
        </authorList>
    </citation>
    <scope>NUCLEOTIDE SEQUENCE [MRNA] OF 1-56</scope>
    <scope>FUNCTION</scope>
    <scope>TISSUE SPECIFICITY</scope>
</reference>
<reference evidence="15" key="2">
    <citation type="journal article" date="1995" name="Mech. Dev.">
        <title>Zebrafish Radar: a new member of the TGF-beta superfamily defines dorsal regions of the neural plate and the embryonic retina.</title>
        <authorList>
            <person name="Rissi M."/>
            <person name="Wittbrodt J."/>
            <person name="Delot E."/>
            <person name="Naegeli M."/>
            <person name="Rosa F.M."/>
        </authorList>
    </citation>
    <scope>NUCLEOTIDE SEQUENCE [MRNA] OF 51-404</scope>
    <scope>FUNCTION</scope>
    <scope>TISSUE SPECIFICITY</scope>
    <source>
        <tissue evidence="12">Embryo</tissue>
    </source>
</reference>
<reference evidence="15" key="3">
    <citation type="journal article" date="2000" name="Mech. Dev.">
        <title>The ventralizing activity of Radar, a maternally expressed bone morphogenetic protein, reveals complex bone morphogenetic protein interactions controlling dorso-ventral patterning in zebrafish.</title>
        <authorList>
            <person name="Goutel C."/>
            <person name="Kishimoto Y."/>
            <person name="Schulte-Merker S."/>
            <person name="Rosa F.M."/>
        </authorList>
    </citation>
    <scope>FUNCTION</scope>
    <scope>TISSUE SPECIFICITY</scope>
    <scope>DEVELOPMENTAL STAGE</scope>
</reference>
<reference evidence="15" key="4">
    <citation type="journal article" date="2002" name="Dev. Biol.">
        <title>Radar is required for the establishment of vascular integrity in the zebrafish.</title>
        <authorList>
            <person name="Hall C.J."/>
            <person name="Flores M.V.C."/>
            <person name="Davidson A.J."/>
            <person name="Crosier K.E."/>
            <person name="Crosier P.S."/>
        </authorList>
    </citation>
    <scope>FUNCTION</scope>
    <scope>TISSUE SPECIFICITY</scope>
</reference>
<reference evidence="15" key="5">
    <citation type="journal article" date="2003" name="Proc. Natl. Acad. Sci. U.S.A.">
        <title>Maternal induction of ventral fate by zebrafish radar.</title>
        <authorList>
            <person name="Sidi S."/>
            <person name="Goutel C."/>
            <person name="Peyrieras N."/>
            <person name="Rosa F.M."/>
        </authorList>
    </citation>
    <scope>FUNCTION</scope>
    <scope>DEVELOPMENTAL STAGE</scope>
</reference>
<reference evidence="15" key="6">
    <citation type="journal article" date="2003" name="Proc. Natl. Acad. Sci. U.S.A.">
        <title>Radar breaks the fog: insights into dorsoventral patterning in zebrafish.</title>
        <authorList>
            <person name="Wilm T.P."/>
            <person name="Solnica-Krezel L."/>
        </authorList>
    </citation>
    <scope>REVIEW</scope>
</reference>
<reference key="7">
    <citation type="journal article" date="2009" name="Proc. Natl. Acad. Sci. U.S.A.">
        <title>An essential role for Radar (Gdf6a) in inducing dorsal fate in the zebrafish retina.</title>
        <authorList>
            <person name="Gosse N.J."/>
            <person name="Baier H."/>
        </authorList>
    </citation>
    <scope>FUNCTION</scope>
</reference>
<reference key="8">
    <citation type="journal article" date="2013" name="Hum. Mol. Genet.">
        <title>Contribution of growth differentiation factor 6-dependent cell survival to early-onset retinal dystrophies.</title>
        <authorList>
            <person name="Asai-Coakwell M."/>
            <person name="March L."/>
            <person name="Dai X.H."/>
            <person name="Duval M."/>
            <person name="Lopez I."/>
            <person name="French C.R."/>
            <person name="Famulski J."/>
            <person name="De Baere E."/>
            <person name="Francis P.J."/>
            <person name="Sundaresan P."/>
            <person name="Sauve Y."/>
            <person name="Koenekoop R.K."/>
            <person name="Berry F.B."/>
            <person name="Allison W.T."/>
            <person name="Waskiewicz A.J."/>
            <person name="Lehmann O.J."/>
        </authorList>
    </citation>
    <scope>FUNCTION</scope>
    <scope>DISRUPTION PHENOTYPE</scope>
</reference>
<reference key="9">
    <citation type="journal article" date="2013" name="Invest. Ophthalmol. Vis. Sci.">
        <title>Molecular mechanisms regulating ocular apoptosis in zebrafish gdf6a mutants.</title>
        <authorList>
            <person name="Pant S.D."/>
            <person name="March L.D."/>
            <person name="Famulski J.K."/>
            <person name="French C.R."/>
            <person name="Lehmann O.J."/>
            <person name="Waskiewicz A.J."/>
        </authorList>
    </citation>
    <scope>FUNCTION IN APOPTOSIS</scope>
</reference>
<evidence type="ECO:0000250" key="1"/>
<evidence type="ECO:0000250" key="2">
    <source>
        <dbReference type="UniProtKB" id="P39905"/>
    </source>
</evidence>
<evidence type="ECO:0000255" key="3"/>
<evidence type="ECO:0000256" key="4">
    <source>
        <dbReference type="SAM" id="MobiDB-lite"/>
    </source>
</evidence>
<evidence type="ECO:0000269" key="5">
    <source>
    </source>
</evidence>
<evidence type="ECO:0000269" key="6">
    <source>
    </source>
</evidence>
<evidence type="ECO:0000269" key="7">
    <source>
    </source>
</evidence>
<evidence type="ECO:0000269" key="8">
    <source>
    </source>
</evidence>
<evidence type="ECO:0000269" key="9">
    <source>
    </source>
</evidence>
<evidence type="ECO:0000269" key="10">
    <source>
    </source>
</evidence>
<evidence type="ECO:0000269" key="11">
    <source>
    </source>
</evidence>
<evidence type="ECO:0000269" key="12">
    <source>
    </source>
</evidence>
<evidence type="ECO:0000303" key="13">
    <source>
    </source>
</evidence>
<evidence type="ECO:0000303" key="14">
    <source>
    </source>
</evidence>
<evidence type="ECO:0000305" key="15"/>
<dbReference type="RefSeq" id="NP_001153466.1">
    <property type="nucleotide sequence ID" value="NM_001159994.1"/>
</dbReference>
<dbReference type="SMR" id="P85857"/>
<dbReference type="FunCoup" id="P85857">
    <property type="interactions" value="295"/>
</dbReference>
<dbReference type="STRING" id="7955.ENSDARP00000069999"/>
<dbReference type="GlyCosmos" id="P85857">
    <property type="glycosylation" value="1 site, No reported glycans"/>
</dbReference>
<dbReference type="PaxDb" id="7955-ENSDARP00000069999"/>
<dbReference type="Ensembl" id="ENSDART00000075517">
    <property type="protein sequence ID" value="ENSDARP00000069999"/>
    <property type="gene ID" value="ENSDARG00000053479"/>
</dbReference>
<dbReference type="GeneID" id="566470"/>
<dbReference type="KEGG" id="dre:566470"/>
<dbReference type="AGR" id="ZFIN:ZDB-GENE-980526-373"/>
<dbReference type="CTD" id="566470"/>
<dbReference type="ZFIN" id="ZDB-GENE-980526-373">
    <property type="gene designation" value="gdf6a"/>
</dbReference>
<dbReference type="eggNOG" id="KOG3900">
    <property type="taxonomic scope" value="Eukaryota"/>
</dbReference>
<dbReference type="HOGENOM" id="CLU_020515_0_0_1"/>
<dbReference type="InParanoid" id="P85857"/>
<dbReference type="OMA" id="KKSKYRC"/>
<dbReference type="OrthoDB" id="5987191at2759"/>
<dbReference type="PhylomeDB" id="P85857"/>
<dbReference type="TreeFam" id="TF316134"/>
<dbReference type="SignaLink" id="P85857"/>
<dbReference type="PRO" id="PR:P85857"/>
<dbReference type="Proteomes" id="UP000000437">
    <property type="component" value="Chromosome 16"/>
</dbReference>
<dbReference type="Bgee" id="ENSDARG00000053479">
    <property type="expression patterns" value="Expressed in germ layer and 77 other cell types or tissues"/>
</dbReference>
<dbReference type="GO" id="GO:0005615">
    <property type="term" value="C:extracellular space"/>
    <property type="evidence" value="ECO:0000318"/>
    <property type="project" value="GO_Central"/>
</dbReference>
<dbReference type="GO" id="GO:0005125">
    <property type="term" value="F:cytokine activity"/>
    <property type="evidence" value="ECO:0000318"/>
    <property type="project" value="GO_Central"/>
</dbReference>
<dbReference type="GO" id="GO:0008083">
    <property type="term" value="F:growth factor activity"/>
    <property type="evidence" value="ECO:0007669"/>
    <property type="project" value="UniProtKB-KW"/>
</dbReference>
<dbReference type="GO" id="GO:0006915">
    <property type="term" value="P:apoptotic process"/>
    <property type="evidence" value="ECO:0000314"/>
    <property type="project" value="UniProtKB"/>
</dbReference>
<dbReference type="GO" id="GO:0001955">
    <property type="term" value="P:blood vessel maturation"/>
    <property type="evidence" value="ECO:0000315"/>
    <property type="project" value="ZFIN"/>
</dbReference>
<dbReference type="GO" id="GO:0048514">
    <property type="term" value="P:blood vessel morphogenesis"/>
    <property type="evidence" value="ECO:0000315"/>
    <property type="project" value="ZFIN"/>
</dbReference>
<dbReference type="GO" id="GO:0030509">
    <property type="term" value="P:BMP signaling pathway"/>
    <property type="evidence" value="ECO:0000318"/>
    <property type="project" value="GO_Central"/>
</dbReference>
<dbReference type="GO" id="GO:0043010">
    <property type="term" value="P:camera-type eye development"/>
    <property type="evidence" value="ECO:0000315"/>
    <property type="project" value="ZFIN"/>
</dbReference>
<dbReference type="GO" id="GO:0060219">
    <property type="term" value="P:camera-type eye photoreceptor cell differentiation"/>
    <property type="evidence" value="ECO:0000316"/>
    <property type="project" value="ZFIN"/>
</dbReference>
<dbReference type="GO" id="GO:0048264">
    <property type="term" value="P:determination of ventral identity"/>
    <property type="evidence" value="ECO:0000314"/>
    <property type="project" value="ZFIN"/>
</dbReference>
<dbReference type="GO" id="GO:0009953">
    <property type="term" value="P:dorsal/ventral pattern formation"/>
    <property type="evidence" value="ECO:0000315"/>
    <property type="project" value="ZFIN"/>
</dbReference>
<dbReference type="GO" id="GO:0031076">
    <property type="term" value="P:embryonic camera-type eye development"/>
    <property type="evidence" value="ECO:0000315"/>
    <property type="project" value="ZFIN"/>
</dbReference>
<dbReference type="GO" id="GO:0060059">
    <property type="term" value="P:embryonic retina morphogenesis in camera-type eye"/>
    <property type="evidence" value="ECO:0000315"/>
    <property type="project" value="ZFIN"/>
</dbReference>
<dbReference type="GO" id="GO:0048706">
    <property type="term" value="P:embryonic skeletal system development"/>
    <property type="evidence" value="ECO:0000315"/>
    <property type="project" value="ZFIN"/>
</dbReference>
<dbReference type="GO" id="GO:0042462">
    <property type="term" value="P:eye photoreceptor cell development"/>
    <property type="evidence" value="ECO:0000315"/>
    <property type="project" value="ZFIN"/>
</dbReference>
<dbReference type="GO" id="GO:0045635">
    <property type="term" value="P:negative regulation of melanocyte differentiation"/>
    <property type="evidence" value="ECO:0000315"/>
    <property type="project" value="ZFIN"/>
</dbReference>
<dbReference type="GO" id="GO:1900747">
    <property type="term" value="P:negative regulation of vascular endothelial growth factor signaling pathway"/>
    <property type="evidence" value="ECO:0000315"/>
    <property type="project" value="ZFIN"/>
</dbReference>
<dbReference type="GO" id="GO:0046552">
    <property type="term" value="P:photoreceptor cell fate commitment"/>
    <property type="evidence" value="ECO:0000315"/>
    <property type="project" value="ZFIN"/>
</dbReference>
<dbReference type="GO" id="GO:0030513">
    <property type="term" value="P:positive regulation of BMP signaling pathway"/>
    <property type="evidence" value="ECO:0000315"/>
    <property type="project" value="ZFIN"/>
</dbReference>
<dbReference type="GO" id="GO:0030510">
    <property type="term" value="P:regulation of BMP signaling pathway"/>
    <property type="evidence" value="ECO:0000315"/>
    <property type="project" value="ZFIN"/>
</dbReference>
<dbReference type="GO" id="GO:0042127">
    <property type="term" value="P:regulation of cell population proliferation"/>
    <property type="evidence" value="ECO:0000315"/>
    <property type="project" value="ZFIN"/>
</dbReference>
<dbReference type="GO" id="GO:0060041">
    <property type="term" value="P:retina development in camera-type eye"/>
    <property type="evidence" value="ECO:0000315"/>
    <property type="project" value="ZFIN"/>
</dbReference>
<dbReference type="GO" id="GO:0001895">
    <property type="term" value="P:retina homeostasis"/>
    <property type="evidence" value="ECO:0000315"/>
    <property type="project" value="ZFIN"/>
</dbReference>
<dbReference type="GO" id="GO:0061298">
    <property type="term" value="P:retina vasculature development in camera-type eye"/>
    <property type="evidence" value="ECO:0000315"/>
    <property type="project" value="ZFIN"/>
</dbReference>
<dbReference type="GO" id="GO:1990009">
    <property type="term" value="P:retinal cell apoptotic process"/>
    <property type="evidence" value="ECO:0000314"/>
    <property type="project" value="UniProtKB"/>
</dbReference>
<dbReference type="GO" id="GO:0042670">
    <property type="term" value="P:retinal cone cell differentiation"/>
    <property type="evidence" value="ECO:0000315"/>
    <property type="project" value="ZFIN"/>
</dbReference>
<dbReference type="GO" id="GO:0042671">
    <property type="term" value="P:retinal cone cell fate determination"/>
    <property type="evidence" value="ECO:0000315"/>
    <property type="project" value="ZFIN"/>
</dbReference>
<dbReference type="GO" id="GO:0031290">
    <property type="term" value="P:retinal ganglion cell axon guidance"/>
    <property type="evidence" value="ECO:0000315"/>
    <property type="project" value="ZFIN"/>
</dbReference>
<dbReference type="GO" id="GO:0048741">
    <property type="term" value="P:skeletal muscle fiber development"/>
    <property type="evidence" value="ECO:0000315"/>
    <property type="project" value="ZFIN"/>
</dbReference>
<dbReference type="CDD" id="cd13766">
    <property type="entry name" value="TGF_beta_GDF5_6_7"/>
    <property type="match status" value="1"/>
</dbReference>
<dbReference type="FunFam" id="2.10.90.10:FF:000001">
    <property type="entry name" value="Bone morphogenetic protein 4"/>
    <property type="match status" value="1"/>
</dbReference>
<dbReference type="FunFam" id="2.60.120.970:FF:000027">
    <property type="entry name" value="Growth differentiation factor 7"/>
    <property type="match status" value="1"/>
</dbReference>
<dbReference type="Gene3D" id="2.60.120.970">
    <property type="match status" value="1"/>
</dbReference>
<dbReference type="Gene3D" id="2.10.90.10">
    <property type="entry name" value="Cystine-knot cytokines"/>
    <property type="match status" value="1"/>
</dbReference>
<dbReference type="InterPro" id="IPR029034">
    <property type="entry name" value="Cystine-knot_cytokine"/>
</dbReference>
<dbReference type="InterPro" id="IPR001839">
    <property type="entry name" value="TGF-b_C"/>
</dbReference>
<dbReference type="InterPro" id="IPR001111">
    <property type="entry name" value="TGF-b_propeptide"/>
</dbReference>
<dbReference type="InterPro" id="IPR015615">
    <property type="entry name" value="TGF-beta-rel"/>
</dbReference>
<dbReference type="InterPro" id="IPR017948">
    <property type="entry name" value="TGFb_CS"/>
</dbReference>
<dbReference type="PANTHER" id="PTHR11848:SF43">
    <property type="entry name" value="GROWTH_DIFFERENTIATION FACTOR 6"/>
    <property type="match status" value="1"/>
</dbReference>
<dbReference type="PANTHER" id="PTHR11848">
    <property type="entry name" value="TGF-BETA FAMILY"/>
    <property type="match status" value="1"/>
</dbReference>
<dbReference type="Pfam" id="PF00019">
    <property type="entry name" value="TGF_beta"/>
    <property type="match status" value="1"/>
</dbReference>
<dbReference type="Pfam" id="PF00688">
    <property type="entry name" value="TGFb_propeptide"/>
    <property type="match status" value="1"/>
</dbReference>
<dbReference type="SMART" id="SM00204">
    <property type="entry name" value="TGFB"/>
    <property type="match status" value="1"/>
</dbReference>
<dbReference type="SUPFAM" id="SSF57501">
    <property type="entry name" value="Cystine-knot cytokines"/>
    <property type="match status" value="1"/>
</dbReference>
<dbReference type="PROSITE" id="PS00250">
    <property type="entry name" value="TGF_BETA_1"/>
    <property type="match status" value="1"/>
</dbReference>
<dbReference type="PROSITE" id="PS51362">
    <property type="entry name" value="TGF_BETA_2"/>
    <property type="match status" value="1"/>
</dbReference>
<keyword id="KW-0053">Apoptosis</keyword>
<keyword id="KW-0165">Cleavage on pair of basic residues</keyword>
<keyword id="KW-0217">Developmental protein</keyword>
<keyword id="KW-1015">Disulfide bond</keyword>
<keyword id="KW-0325">Glycoprotein</keyword>
<keyword id="KW-0339">Growth factor</keyword>
<keyword id="KW-1185">Reference proteome</keyword>
<keyword id="KW-0964">Secreted</keyword>
<keyword id="KW-0732">Signal</keyword>
<gene>
    <name type="primary">gdf6a</name>
    <name evidence="14" type="synonym">radar</name>
    <name evidence="13" type="synonym">rdr</name>
</gene>
<accession>P85857</accession>